<gene>
    <name type="primary">SAP7</name>
    <name type="synonym">ZFP48</name>
    <name type="ordered locus">Os03g0793000</name>
    <name type="ordered locus">LOC_Os03g57900</name>
    <name evidence="5" type="ORF">OsJ_12914</name>
    <name type="ORF">OSJNBb0060J21.16</name>
</gene>
<accession>Q852K6</accession>
<accession>A3ANI6</accession>
<evidence type="ECO:0000250" key="1"/>
<evidence type="ECO:0000255" key="2">
    <source>
        <dbReference type="PROSITE-ProRule" id="PRU00449"/>
    </source>
</evidence>
<evidence type="ECO:0000255" key="3">
    <source>
        <dbReference type="PROSITE-ProRule" id="PRU00451"/>
    </source>
</evidence>
<evidence type="ECO:0000269" key="4">
    <source>
    </source>
</evidence>
<evidence type="ECO:0000312" key="5">
    <source>
        <dbReference type="EMBL" id="EAZ28875.1"/>
    </source>
</evidence>
<proteinExistence type="evidence at transcript level"/>
<protein>
    <recommendedName>
        <fullName>Zinc finger A20 and AN1 domain-containing stress-associated protein 7</fullName>
        <shortName>OsSAP7</shortName>
    </recommendedName>
</protein>
<name>SAP7_ORYSJ</name>
<feature type="chain" id="PRO_0000269870" description="Zinc finger A20 and AN1 domain-containing stress-associated protein 7">
    <location>
        <begin position="1"/>
        <end position="169"/>
    </location>
</feature>
<feature type="zinc finger region" description="A20-type" evidence="3">
    <location>
        <begin position="18"/>
        <end position="52"/>
    </location>
</feature>
<feature type="zinc finger region" description="AN1-type" evidence="2">
    <location>
        <begin position="103"/>
        <end position="149"/>
    </location>
</feature>
<feature type="binding site" evidence="3">
    <location>
        <position position="24"/>
    </location>
    <ligand>
        <name>Zn(2+)</name>
        <dbReference type="ChEBI" id="CHEBI:29105"/>
        <label>1</label>
    </ligand>
</feature>
<feature type="binding site" evidence="3">
    <location>
        <position position="28"/>
    </location>
    <ligand>
        <name>Zn(2+)</name>
        <dbReference type="ChEBI" id="CHEBI:29105"/>
        <label>1</label>
    </ligand>
</feature>
<feature type="binding site" evidence="3">
    <location>
        <position position="40"/>
    </location>
    <ligand>
        <name>Zn(2+)</name>
        <dbReference type="ChEBI" id="CHEBI:29105"/>
        <label>1</label>
    </ligand>
</feature>
<feature type="binding site" evidence="3">
    <location>
        <position position="43"/>
    </location>
    <ligand>
        <name>Zn(2+)</name>
        <dbReference type="ChEBI" id="CHEBI:29105"/>
        <label>1</label>
    </ligand>
</feature>
<feature type="binding site" evidence="2">
    <location>
        <position position="109"/>
    </location>
    <ligand>
        <name>Zn(2+)</name>
        <dbReference type="ChEBI" id="CHEBI:29105"/>
        <label>2</label>
    </ligand>
</feature>
<feature type="binding site" evidence="2">
    <location>
        <position position="112"/>
    </location>
    <ligand>
        <name>Zn(2+)</name>
        <dbReference type="ChEBI" id="CHEBI:29105"/>
        <label>2</label>
    </ligand>
</feature>
<feature type="binding site" evidence="2">
    <location>
        <position position="123"/>
    </location>
    <ligand>
        <name>Zn(2+)</name>
        <dbReference type="ChEBI" id="CHEBI:29105"/>
        <label>3</label>
    </ligand>
</feature>
<feature type="binding site" evidence="2">
    <location>
        <position position="125"/>
    </location>
    <ligand>
        <name>Zn(2+)</name>
        <dbReference type="ChEBI" id="CHEBI:29105"/>
        <label>3</label>
    </ligand>
</feature>
<feature type="binding site" evidence="2">
    <location>
        <position position="130"/>
    </location>
    <ligand>
        <name>Zn(2+)</name>
        <dbReference type="ChEBI" id="CHEBI:29105"/>
        <label>2</label>
    </ligand>
</feature>
<feature type="binding site" evidence="2">
    <location>
        <position position="133"/>
    </location>
    <ligand>
        <name>Zn(2+)</name>
        <dbReference type="ChEBI" id="CHEBI:29105"/>
        <label>2</label>
    </ligand>
</feature>
<feature type="binding site" evidence="2">
    <location>
        <position position="139"/>
    </location>
    <ligand>
        <name>Zn(2+)</name>
        <dbReference type="ChEBI" id="CHEBI:29105"/>
        <label>3</label>
    </ligand>
</feature>
<feature type="binding site" evidence="2">
    <location>
        <position position="141"/>
    </location>
    <ligand>
        <name>Zn(2+)</name>
        <dbReference type="ChEBI" id="CHEBI:29105"/>
        <label>3</label>
    </ligand>
</feature>
<reference key="1">
    <citation type="submission" date="2003-09" db="EMBL/GenBank/DDBJ databases">
        <title>A novel cDNA OsZFP48, encodes a putative zinc finger protein.</title>
        <authorList>
            <person name="Huang J."/>
            <person name="Zhang H.-S."/>
        </authorList>
    </citation>
    <scope>NUCLEOTIDE SEQUENCE [MRNA]</scope>
    <source>
        <strain>cv. Jiu Caiqing</strain>
    </source>
</reference>
<reference key="2">
    <citation type="journal article" date="2005" name="Genome Res.">
        <title>Sequence, annotation, and analysis of synteny between rice chromosome 3 and diverged grass species.</title>
        <authorList>
            <consortium name="The rice chromosome 3 sequencing consortium"/>
            <person name="Buell C.R."/>
            <person name="Yuan Q."/>
            <person name="Ouyang S."/>
            <person name="Liu J."/>
            <person name="Zhu W."/>
            <person name="Wang A."/>
            <person name="Maiti R."/>
            <person name="Haas B."/>
            <person name="Wortman J."/>
            <person name="Pertea M."/>
            <person name="Jones K.M."/>
            <person name="Kim M."/>
            <person name="Overton L."/>
            <person name="Tsitrin T."/>
            <person name="Fadrosh D."/>
            <person name="Bera J."/>
            <person name="Weaver B."/>
            <person name="Jin S."/>
            <person name="Johri S."/>
            <person name="Reardon M."/>
            <person name="Webb K."/>
            <person name="Hill J."/>
            <person name="Moffat K."/>
            <person name="Tallon L."/>
            <person name="Van Aken S."/>
            <person name="Lewis M."/>
            <person name="Utterback T."/>
            <person name="Feldblyum T."/>
            <person name="Zismann V."/>
            <person name="Iobst S."/>
            <person name="Hsiao J."/>
            <person name="de Vazeille A.R."/>
            <person name="Salzberg S.L."/>
            <person name="White O."/>
            <person name="Fraser C.M."/>
            <person name="Yu Y."/>
            <person name="Kim H."/>
            <person name="Rambo T."/>
            <person name="Currie J."/>
            <person name="Collura K."/>
            <person name="Kernodle-Thompson S."/>
            <person name="Wei F."/>
            <person name="Kudrna K."/>
            <person name="Ammiraju J.S.S."/>
            <person name="Luo M."/>
            <person name="Goicoechea J.L."/>
            <person name="Wing R.A."/>
            <person name="Henry D."/>
            <person name="Oates R."/>
            <person name="Palmer M."/>
            <person name="Pries G."/>
            <person name="Saski C."/>
            <person name="Simmons J."/>
            <person name="Soderlund C."/>
            <person name="Nelson W."/>
            <person name="de la Bastide M."/>
            <person name="Spiegel L."/>
            <person name="Nascimento L."/>
            <person name="Huang E."/>
            <person name="Preston R."/>
            <person name="Zutavern T."/>
            <person name="Palmer L."/>
            <person name="O'Shaughnessy A."/>
            <person name="Dike S."/>
            <person name="McCombie W.R."/>
            <person name="Minx P."/>
            <person name="Cordum H."/>
            <person name="Wilson R."/>
            <person name="Jin W."/>
            <person name="Lee H.R."/>
            <person name="Jiang J."/>
            <person name="Jackson S."/>
        </authorList>
    </citation>
    <scope>NUCLEOTIDE SEQUENCE [LARGE SCALE GENOMIC DNA]</scope>
    <source>
        <strain>cv. Nipponbare</strain>
    </source>
</reference>
<reference key="3">
    <citation type="journal article" date="2005" name="Nature">
        <title>The map-based sequence of the rice genome.</title>
        <authorList>
            <consortium name="International rice genome sequencing project (IRGSP)"/>
        </authorList>
    </citation>
    <scope>NUCLEOTIDE SEQUENCE [LARGE SCALE GENOMIC DNA]</scope>
    <source>
        <strain>cv. Nipponbare</strain>
    </source>
</reference>
<reference key="4">
    <citation type="journal article" date="2008" name="Nucleic Acids Res.">
        <title>The rice annotation project database (RAP-DB): 2008 update.</title>
        <authorList>
            <consortium name="The rice annotation project (RAP)"/>
        </authorList>
    </citation>
    <scope>GENOME REANNOTATION</scope>
    <source>
        <strain>cv. Nipponbare</strain>
    </source>
</reference>
<reference key="5">
    <citation type="journal article" date="2013" name="Rice">
        <title>Improvement of the Oryza sativa Nipponbare reference genome using next generation sequence and optical map data.</title>
        <authorList>
            <person name="Kawahara Y."/>
            <person name="de la Bastide M."/>
            <person name="Hamilton J.P."/>
            <person name="Kanamori H."/>
            <person name="McCombie W.R."/>
            <person name="Ouyang S."/>
            <person name="Schwartz D.C."/>
            <person name="Tanaka T."/>
            <person name="Wu J."/>
            <person name="Zhou S."/>
            <person name="Childs K.L."/>
            <person name="Davidson R.M."/>
            <person name="Lin H."/>
            <person name="Quesada-Ocampo L."/>
            <person name="Vaillancourt B."/>
            <person name="Sakai H."/>
            <person name="Lee S.S."/>
            <person name="Kim J."/>
            <person name="Numa H."/>
            <person name="Itoh T."/>
            <person name="Buell C.R."/>
            <person name="Matsumoto T."/>
        </authorList>
    </citation>
    <scope>GENOME REANNOTATION</scope>
    <source>
        <strain>cv. Nipponbare</strain>
    </source>
</reference>
<reference key="6">
    <citation type="journal article" date="2005" name="PLoS Biol.">
        <title>The genomes of Oryza sativa: a history of duplications.</title>
        <authorList>
            <person name="Yu J."/>
            <person name="Wang J."/>
            <person name="Lin W."/>
            <person name="Li S."/>
            <person name="Li H."/>
            <person name="Zhou J."/>
            <person name="Ni P."/>
            <person name="Dong W."/>
            <person name="Hu S."/>
            <person name="Zeng C."/>
            <person name="Zhang J."/>
            <person name="Zhang Y."/>
            <person name="Li R."/>
            <person name="Xu Z."/>
            <person name="Li S."/>
            <person name="Li X."/>
            <person name="Zheng H."/>
            <person name="Cong L."/>
            <person name="Lin L."/>
            <person name="Yin J."/>
            <person name="Geng J."/>
            <person name="Li G."/>
            <person name="Shi J."/>
            <person name="Liu J."/>
            <person name="Lv H."/>
            <person name="Li J."/>
            <person name="Wang J."/>
            <person name="Deng Y."/>
            <person name="Ran L."/>
            <person name="Shi X."/>
            <person name="Wang X."/>
            <person name="Wu Q."/>
            <person name="Li C."/>
            <person name="Ren X."/>
            <person name="Wang J."/>
            <person name="Wang X."/>
            <person name="Li D."/>
            <person name="Liu D."/>
            <person name="Zhang X."/>
            <person name="Ji Z."/>
            <person name="Zhao W."/>
            <person name="Sun Y."/>
            <person name="Zhang Z."/>
            <person name="Bao J."/>
            <person name="Han Y."/>
            <person name="Dong L."/>
            <person name="Ji J."/>
            <person name="Chen P."/>
            <person name="Wu S."/>
            <person name="Liu J."/>
            <person name="Xiao Y."/>
            <person name="Bu D."/>
            <person name="Tan J."/>
            <person name="Yang L."/>
            <person name="Ye C."/>
            <person name="Zhang J."/>
            <person name="Xu J."/>
            <person name="Zhou Y."/>
            <person name="Yu Y."/>
            <person name="Zhang B."/>
            <person name="Zhuang S."/>
            <person name="Wei H."/>
            <person name="Liu B."/>
            <person name="Lei M."/>
            <person name="Yu H."/>
            <person name="Li Y."/>
            <person name="Xu H."/>
            <person name="Wei S."/>
            <person name="He X."/>
            <person name="Fang L."/>
            <person name="Zhang Z."/>
            <person name="Zhang Y."/>
            <person name="Huang X."/>
            <person name="Su Z."/>
            <person name="Tong W."/>
            <person name="Li J."/>
            <person name="Tong Z."/>
            <person name="Li S."/>
            <person name="Ye J."/>
            <person name="Wang L."/>
            <person name="Fang L."/>
            <person name="Lei T."/>
            <person name="Chen C.-S."/>
            <person name="Chen H.-C."/>
            <person name="Xu Z."/>
            <person name="Li H."/>
            <person name="Huang H."/>
            <person name="Zhang F."/>
            <person name="Xu H."/>
            <person name="Li N."/>
            <person name="Zhao C."/>
            <person name="Li S."/>
            <person name="Dong L."/>
            <person name="Huang Y."/>
            <person name="Li L."/>
            <person name="Xi Y."/>
            <person name="Qi Q."/>
            <person name="Li W."/>
            <person name="Zhang B."/>
            <person name="Hu W."/>
            <person name="Zhang Y."/>
            <person name="Tian X."/>
            <person name="Jiao Y."/>
            <person name="Liang X."/>
            <person name="Jin J."/>
            <person name="Gao L."/>
            <person name="Zheng W."/>
            <person name="Hao B."/>
            <person name="Liu S.-M."/>
            <person name="Wang W."/>
            <person name="Yuan L."/>
            <person name="Cao M."/>
            <person name="McDermott J."/>
            <person name="Samudrala R."/>
            <person name="Wang J."/>
            <person name="Wong G.K.-S."/>
            <person name="Yang H."/>
        </authorList>
    </citation>
    <scope>NUCLEOTIDE SEQUENCE [LARGE SCALE GENOMIC DNA]</scope>
    <source>
        <strain>cv. Nipponbare</strain>
    </source>
</reference>
<reference key="7">
    <citation type="journal article" date="2003" name="Science">
        <title>Collection, mapping, and annotation of over 28,000 cDNA clones from japonica rice.</title>
        <authorList>
            <consortium name="The rice full-length cDNA consortium"/>
        </authorList>
    </citation>
    <scope>NUCLEOTIDE SEQUENCE [LARGE SCALE MRNA]</scope>
    <source>
        <strain>cv. Nipponbare</strain>
    </source>
</reference>
<reference key="8">
    <citation type="journal article" date="2006" name="Mol. Genet. Genomics">
        <title>Genome-wide analysis of the stress associated protein (SAP) gene family containing A20/AN1 zinc-finger(s) in rice and their phylogenetic relationship with Arabidopsis.</title>
        <authorList>
            <person name="Vij S."/>
            <person name="Tyagi A.K."/>
        </authorList>
    </citation>
    <scope>GENE FAMILY</scope>
    <scope>INDUCTION</scope>
</reference>
<dbReference type="EMBL" id="AY526867">
    <property type="protein sequence ID" value="AAS19692.1"/>
    <property type="molecule type" value="mRNA"/>
</dbReference>
<dbReference type="EMBL" id="AC090871">
    <property type="protein sequence ID" value="AAO37972.1"/>
    <property type="molecule type" value="Genomic_DNA"/>
</dbReference>
<dbReference type="EMBL" id="DP000009">
    <property type="protein sequence ID" value="ABF99307.1"/>
    <property type="molecule type" value="Genomic_DNA"/>
</dbReference>
<dbReference type="EMBL" id="AP008209">
    <property type="protein sequence ID" value="BAF13442.1"/>
    <property type="molecule type" value="Genomic_DNA"/>
</dbReference>
<dbReference type="EMBL" id="AP014959">
    <property type="protein sequence ID" value="BAS86802.1"/>
    <property type="molecule type" value="Genomic_DNA"/>
</dbReference>
<dbReference type="EMBL" id="CM000140">
    <property type="protein sequence ID" value="EAZ28875.1"/>
    <property type="molecule type" value="Genomic_DNA"/>
</dbReference>
<dbReference type="EMBL" id="AK108205">
    <property type="protein sequence ID" value="BAG98325.1"/>
    <property type="molecule type" value="mRNA"/>
</dbReference>
<dbReference type="RefSeq" id="XP_015633143.1">
    <property type="nucleotide sequence ID" value="XM_015777657.1"/>
</dbReference>
<dbReference type="SMR" id="Q852K6"/>
<dbReference type="STRING" id="39947.Q852K6"/>
<dbReference type="PaxDb" id="39947-Q852K6"/>
<dbReference type="EnsemblPlants" id="Os03t0793000-01">
    <property type="protein sequence ID" value="Os03t0793000-01"/>
    <property type="gene ID" value="Os03g0793000"/>
</dbReference>
<dbReference type="Gramene" id="Os03t0793000-01">
    <property type="protein sequence ID" value="Os03t0793000-01"/>
    <property type="gene ID" value="Os03g0793000"/>
</dbReference>
<dbReference type="KEGG" id="dosa:Os03g0793000"/>
<dbReference type="eggNOG" id="KOG3173">
    <property type="taxonomic scope" value="Eukaryota"/>
</dbReference>
<dbReference type="HOGENOM" id="CLU_057016_5_0_1"/>
<dbReference type="InParanoid" id="Q852K6"/>
<dbReference type="OMA" id="ATTGNMC"/>
<dbReference type="OrthoDB" id="428577at2759"/>
<dbReference type="Proteomes" id="UP000000763">
    <property type="component" value="Chromosome 3"/>
</dbReference>
<dbReference type="Proteomes" id="UP000007752">
    <property type="component" value="Chromosome 3"/>
</dbReference>
<dbReference type="Proteomes" id="UP000059680">
    <property type="component" value="Chromosome 3"/>
</dbReference>
<dbReference type="GO" id="GO:0003677">
    <property type="term" value="F:DNA binding"/>
    <property type="evidence" value="ECO:0007669"/>
    <property type="project" value="InterPro"/>
</dbReference>
<dbReference type="GO" id="GO:0008270">
    <property type="term" value="F:zinc ion binding"/>
    <property type="evidence" value="ECO:0007669"/>
    <property type="project" value="UniProtKB-KW"/>
</dbReference>
<dbReference type="FunFam" id="4.10.1110.10:FF:000001">
    <property type="entry name" value="Zinc finger AN1-type containing 6"/>
    <property type="match status" value="1"/>
</dbReference>
<dbReference type="Gene3D" id="1.20.5.4770">
    <property type="match status" value="1"/>
</dbReference>
<dbReference type="Gene3D" id="4.10.1110.10">
    <property type="entry name" value="AN1-like Zinc finger"/>
    <property type="match status" value="1"/>
</dbReference>
<dbReference type="InterPro" id="IPR035896">
    <property type="entry name" value="AN1-like_Znf"/>
</dbReference>
<dbReference type="InterPro" id="IPR050652">
    <property type="entry name" value="AN1_A20_ZnFinger"/>
</dbReference>
<dbReference type="InterPro" id="IPR002653">
    <property type="entry name" value="Znf_A20"/>
</dbReference>
<dbReference type="InterPro" id="IPR000058">
    <property type="entry name" value="Znf_AN1"/>
</dbReference>
<dbReference type="PANTHER" id="PTHR10634">
    <property type="entry name" value="AN1-TYPE ZINC FINGER PROTEIN"/>
    <property type="match status" value="1"/>
</dbReference>
<dbReference type="PANTHER" id="PTHR10634:SF98">
    <property type="entry name" value="ZINC FINGER A20 AND AN1 DOMAIN-CONTAINING STRESS-ASSOCIATED PROTEIN 3"/>
    <property type="match status" value="1"/>
</dbReference>
<dbReference type="Pfam" id="PF01754">
    <property type="entry name" value="zf-A20"/>
    <property type="match status" value="1"/>
</dbReference>
<dbReference type="Pfam" id="PF01428">
    <property type="entry name" value="zf-AN1"/>
    <property type="match status" value="1"/>
</dbReference>
<dbReference type="SMART" id="SM00259">
    <property type="entry name" value="ZnF_A20"/>
    <property type="match status" value="1"/>
</dbReference>
<dbReference type="SMART" id="SM00154">
    <property type="entry name" value="ZnF_AN1"/>
    <property type="match status" value="1"/>
</dbReference>
<dbReference type="SUPFAM" id="SSF118310">
    <property type="entry name" value="AN1-like Zinc finger"/>
    <property type="match status" value="1"/>
</dbReference>
<dbReference type="SUPFAM" id="SSF57716">
    <property type="entry name" value="Glucocorticoid receptor-like (DNA-binding domain)"/>
    <property type="match status" value="1"/>
</dbReference>
<dbReference type="PROSITE" id="PS51036">
    <property type="entry name" value="ZF_A20"/>
    <property type="match status" value="1"/>
</dbReference>
<dbReference type="PROSITE" id="PS51039">
    <property type="entry name" value="ZF_AN1"/>
    <property type="match status" value="1"/>
</dbReference>
<comment type="function">
    <text evidence="1">May be involved in environmental stress response.</text>
</comment>
<comment type="induction">
    <text evidence="4">By dehydration and salt stress.</text>
</comment>
<keyword id="KW-0479">Metal-binding</keyword>
<keyword id="KW-1185">Reference proteome</keyword>
<keyword id="KW-0346">Stress response</keyword>
<keyword id="KW-0862">Zinc</keyword>
<keyword id="KW-0863">Zinc-finger</keyword>
<sequence>MASMKRKCPDDETACGSGAGAAMCVTGCGFFGSEATNNMCSRCYREHSADNDAVEEAAAANSDLELVGVAETTTKKARMSAVVPVAVASSSSAAAEQPAAKAATAPNRCAACRKKVGLTGFKCRCGGNFCGGHRHADAHGCGFDYKSAGKEQIAKQNPLVVADKLATRI</sequence>
<organism>
    <name type="scientific">Oryza sativa subsp. japonica</name>
    <name type="common">Rice</name>
    <dbReference type="NCBI Taxonomy" id="39947"/>
    <lineage>
        <taxon>Eukaryota</taxon>
        <taxon>Viridiplantae</taxon>
        <taxon>Streptophyta</taxon>
        <taxon>Embryophyta</taxon>
        <taxon>Tracheophyta</taxon>
        <taxon>Spermatophyta</taxon>
        <taxon>Magnoliopsida</taxon>
        <taxon>Liliopsida</taxon>
        <taxon>Poales</taxon>
        <taxon>Poaceae</taxon>
        <taxon>BOP clade</taxon>
        <taxon>Oryzoideae</taxon>
        <taxon>Oryzeae</taxon>
        <taxon>Oryzinae</taxon>
        <taxon>Oryza</taxon>
        <taxon>Oryza sativa</taxon>
    </lineage>
</organism>